<accession>F4JFR7</accession>
<accession>Q9LJH4</accession>
<sequence>MATTNYSMIFIGNLQVAVDRSSLYESSDYSSFVARECLNKDSAMKPYDIFIFEKDEHFSVEDHYTAGNSSNESNTRPSDIFLKKKLVGLNPSILQLNREKRKATLKFSGDNKDILQSTLSSSKNINLSGGLFVSREYENKYVKFGARMRCDLVNRMKDVTLAWHESVSSTSDKNVELSSVENHKIAPKADGPGNSSNESSSSPFDIFLKKKVMRLKPSFLELNREKKKAAKGFSGIVIRPGMVLLKNYLSINNQVMIVNKCRQLGLGEGGFYQPGFQDGGLLHLKMMCLGKNWDCQTRRYGEIRPIDGSVPPRIPVEFSQLVEKAIKESKSLVATNSNETKGGDEIPLLLPDICVVNFYTSTGKLGLHQVSVYDKTSFDFLKYKGGYLNTDKGESKKSLRKGLPIVSFSIGDSAEFLYGDQKDVDKADTLILESGDVLIFGERSRNVFHGVRSIRKILPPRLFFRKQIFNQVV</sequence>
<gene>
    <name evidence="5" type="primary">ALKBH1B</name>
    <name evidence="8" type="ordered locus">At3g14140</name>
    <name evidence="9" type="ORF">MAG2.10</name>
</gene>
<keyword id="KW-0223">Dioxygenase</keyword>
<keyword id="KW-0227">DNA damage</keyword>
<keyword id="KW-0234">DNA repair</keyword>
<keyword id="KW-0408">Iron</keyword>
<keyword id="KW-0479">Metal-binding</keyword>
<keyword id="KW-0560">Oxidoreductase</keyword>
<keyword id="KW-1185">Reference proteome</keyword>
<comment type="function">
    <text evidence="1 3">Dioxygenase that may catalyzes DNA N(6)-methyladenine (6 mA) demethylation (By similarity). Requires molecular oxygen, alpha-ketoglutarate and iron (By similarity).</text>
</comment>
<comment type="catalytic activity">
    <reaction evidence="1">
        <text>an N(6)-methyl-2'-deoxyadenosine in DNA + 2-oxoglutarate + O2 = a 2'-deoxyadenosine in DNA + formaldehyde + succinate + CO2</text>
        <dbReference type="Rhea" id="RHEA:49524"/>
        <dbReference type="Rhea" id="RHEA-COMP:12418"/>
        <dbReference type="Rhea" id="RHEA-COMP:12419"/>
        <dbReference type="ChEBI" id="CHEBI:15379"/>
        <dbReference type="ChEBI" id="CHEBI:16526"/>
        <dbReference type="ChEBI" id="CHEBI:16810"/>
        <dbReference type="ChEBI" id="CHEBI:16842"/>
        <dbReference type="ChEBI" id="CHEBI:30031"/>
        <dbReference type="ChEBI" id="CHEBI:90615"/>
        <dbReference type="ChEBI" id="CHEBI:90616"/>
        <dbReference type="EC" id="1.14.11.51"/>
    </reaction>
    <physiologicalReaction direction="left-to-right" evidence="1">
        <dbReference type="Rhea" id="RHEA:49525"/>
    </physiologicalReaction>
</comment>
<comment type="cofactor">
    <cofactor evidence="2">
        <name>Fe(2+)</name>
        <dbReference type="ChEBI" id="CHEBI:29033"/>
    </cofactor>
    <text evidence="2">Binds 1 Fe(2+) ion per subunit.</text>
</comment>
<comment type="tissue specificity">
    <text evidence="4">Undetectable.</text>
</comment>
<comment type="similarity">
    <text evidence="6">Belongs to the alkB family.</text>
</comment>
<comment type="sequence caution" evidence="6">
    <conflict type="erroneous gene model prediction">
        <sequence resource="EMBL-CDS" id="BAB02978"/>
    </conflict>
</comment>
<protein>
    <recommendedName>
        <fullName evidence="5">Probable DNA N(6)-methyladenine demethylase ALKBH1B</fullName>
        <shortName evidence="5">DNA 6 mA demethylase ALKBH1B</shortName>
        <ecNumber evidence="1">1.14.11.51</ecNumber>
    </recommendedName>
    <alternativeName>
        <fullName evidence="5">Alkylated DNA repair protein alkB homolog 1B</fullName>
        <shortName evidence="5">AtALKBH1B</shortName>
        <shortName evidence="7">Protein alkB homolog 1B</shortName>
    </alternativeName>
    <alternativeName>
        <fullName evidence="5">Alpha-ketoglutarate-dependent dioxygenase ALKBH1B</fullName>
    </alternativeName>
</protein>
<reference key="1">
    <citation type="journal article" date="2000" name="DNA Res.">
        <title>Structural analysis of Arabidopsis thaliana chromosome 3. II. Sequence features of the 4,251,695 bp regions covered by 90 P1, TAC and BAC clones.</title>
        <authorList>
            <person name="Kaneko T."/>
            <person name="Katoh T."/>
            <person name="Sato S."/>
            <person name="Nakamura Y."/>
            <person name="Asamizu E."/>
            <person name="Tabata S."/>
        </authorList>
    </citation>
    <scope>NUCLEOTIDE SEQUENCE [LARGE SCALE GENOMIC DNA]</scope>
    <source>
        <strain>cv. Columbia</strain>
    </source>
</reference>
<reference key="2">
    <citation type="journal article" date="2017" name="Plant J.">
        <title>Araport11: a complete reannotation of the Arabidopsis thaliana reference genome.</title>
        <authorList>
            <person name="Cheng C.Y."/>
            <person name="Krishnakumar V."/>
            <person name="Chan A.P."/>
            <person name="Thibaud-Nissen F."/>
            <person name="Schobel S."/>
            <person name="Town C.D."/>
        </authorList>
    </citation>
    <scope>GENOME REANNOTATION</scope>
    <source>
        <strain>cv. Columbia</strain>
    </source>
</reference>
<reference key="3">
    <citation type="journal article" date="2024" name="Plant Sci.">
        <title>Identification of AtALKBH1A and AtALKBH1D as DNA N6-adenine demethylases in Arabidopsis thaliana.</title>
        <authorList>
            <person name="Li D."/>
            <person name="Du J."/>
            <person name="Gao M."/>
            <person name="He C."/>
        </authorList>
    </citation>
    <scope>TISSUE SPECIFICITY</scope>
    <scope>GENE FAMILY</scope>
    <scope>NOMENCLATURE</scope>
    <source>
        <strain>cv. Columbia</strain>
    </source>
</reference>
<feature type="chain" id="PRO_0000460629" description="Probable DNA N(6)-methyladenine demethylase ALKBH1B">
    <location>
        <begin position="1"/>
        <end position="473"/>
    </location>
</feature>
<feature type="binding site" evidence="2">
    <location>
        <begin position="357"/>
        <end position="359"/>
    </location>
    <ligand>
        <name>2-oxoglutarate</name>
        <dbReference type="ChEBI" id="CHEBI:16810"/>
    </ligand>
</feature>
<feature type="binding site" evidence="2">
    <location>
        <position position="368"/>
    </location>
    <ligand>
        <name>Fe cation</name>
        <dbReference type="ChEBI" id="CHEBI:24875"/>
        <note>catalytic</note>
    </ligand>
</feature>
<feature type="binding site" evidence="2">
    <location>
        <position position="391"/>
    </location>
    <ligand>
        <name>Fe cation</name>
        <dbReference type="ChEBI" id="CHEBI:24875"/>
        <note>catalytic</note>
    </ligand>
</feature>
<feature type="binding site" evidence="2">
    <location>
        <position position="449"/>
    </location>
    <ligand>
        <name>Fe cation</name>
        <dbReference type="ChEBI" id="CHEBI:24875"/>
        <note>catalytic</note>
    </ligand>
</feature>
<feature type="binding site" evidence="2">
    <location>
        <begin position="461"/>
        <end position="465"/>
    </location>
    <ligand>
        <name>2-oxoglutarate</name>
        <dbReference type="ChEBI" id="CHEBI:16810"/>
    </ligand>
</feature>
<name>AKB1B_ARATH</name>
<dbReference type="EC" id="1.14.11.51" evidence="1"/>
<dbReference type="EMBL" id="AP000600">
    <property type="protein sequence ID" value="BAB02978.1"/>
    <property type="status" value="ALT_SEQ"/>
    <property type="molecule type" value="Genomic_DNA"/>
</dbReference>
<dbReference type="EMBL" id="CP002686">
    <property type="protein sequence ID" value="AEE75476.1"/>
    <property type="molecule type" value="Genomic_DNA"/>
</dbReference>
<dbReference type="RefSeq" id="NP_188030.2">
    <property type="nucleotide sequence ID" value="NM_112270.2"/>
</dbReference>
<dbReference type="SMR" id="F4JFR7"/>
<dbReference type="PaxDb" id="3702-AT3G14140.1"/>
<dbReference type="EnsemblPlants" id="AT3G14140.1">
    <property type="protein sequence ID" value="AT3G14140.1"/>
    <property type="gene ID" value="AT3G14140"/>
</dbReference>
<dbReference type="GeneID" id="820631"/>
<dbReference type="Gramene" id="AT3G14140.1">
    <property type="protein sequence ID" value="AT3G14140.1"/>
    <property type="gene ID" value="AT3G14140"/>
</dbReference>
<dbReference type="KEGG" id="ath:AT3G14140"/>
<dbReference type="Araport" id="AT3G14140"/>
<dbReference type="TAIR" id="AT3G14140"/>
<dbReference type="eggNOG" id="KOG2731">
    <property type="taxonomic scope" value="Eukaryota"/>
</dbReference>
<dbReference type="HOGENOM" id="CLU_577916_0_0_1"/>
<dbReference type="InParanoid" id="F4JFR7"/>
<dbReference type="OMA" id="RECEGRM"/>
<dbReference type="Proteomes" id="UP000006548">
    <property type="component" value="Chromosome 3"/>
</dbReference>
<dbReference type="ExpressionAtlas" id="F4JFR7">
    <property type="expression patterns" value="baseline and differential"/>
</dbReference>
<dbReference type="GO" id="GO:0005737">
    <property type="term" value="C:cytoplasm"/>
    <property type="evidence" value="ECO:0000250"/>
    <property type="project" value="UniProtKB"/>
</dbReference>
<dbReference type="GO" id="GO:0005634">
    <property type="term" value="C:nucleus"/>
    <property type="evidence" value="ECO:0000250"/>
    <property type="project" value="UniProtKB"/>
</dbReference>
<dbReference type="GO" id="GO:0141131">
    <property type="term" value="F:DNA N6-methyladenine demethylase activity"/>
    <property type="evidence" value="ECO:0000250"/>
    <property type="project" value="UniProtKB"/>
</dbReference>
<dbReference type="GO" id="GO:0046872">
    <property type="term" value="F:metal ion binding"/>
    <property type="evidence" value="ECO:0007669"/>
    <property type="project" value="UniProtKB-KW"/>
</dbReference>
<dbReference type="GO" id="GO:0006281">
    <property type="term" value="P:DNA repair"/>
    <property type="evidence" value="ECO:0007669"/>
    <property type="project" value="UniProtKB-KW"/>
</dbReference>
<dbReference type="Gene3D" id="2.60.120.590">
    <property type="entry name" value="Alpha-ketoglutarate-dependent dioxygenase AlkB-like"/>
    <property type="match status" value="1"/>
</dbReference>
<dbReference type="InterPro" id="IPR004574">
    <property type="entry name" value="Alkb"/>
</dbReference>
<dbReference type="InterPro" id="IPR027450">
    <property type="entry name" value="AlkB-like"/>
</dbReference>
<dbReference type="InterPro" id="IPR037151">
    <property type="entry name" value="AlkB-like_sf"/>
</dbReference>
<dbReference type="PANTHER" id="PTHR16557">
    <property type="entry name" value="ALKYLATED DNA REPAIR PROTEIN ALKB-RELATED"/>
    <property type="match status" value="1"/>
</dbReference>
<dbReference type="PANTHER" id="PTHR16557:SF2">
    <property type="entry name" value="NUCLEIC ACID DIOXYGENASE ALKBH1"/>
    <property type="match status" value="1"/>
</dbReference>
<dbReference type="Pfam" id="PF13532">
    <property type="entry name" value="2OG-FeII_Oxy_2"/>
    <property type="match status" value="2"/>
</dbReference>
<dbReference type="SUPFAM" id="SSF51197">
    <property type="entry name" value="Clavaminate synthase-like"/>
    <property type="match status" value="1"/>
</dbReference>
<evidence type="ECO:0000250" key="1">
    <source>
        <dbReference type="UniProtKB" id="F4KAV2"/>
    </source>
</evidence>
<evidence type="ECO:0000250" key="2">
    <source>
        <dbReference type="UniProtKB" id="P05050"/>
    </source>
</evidence>
<evidence type="ECO:0000250" key="3">
    <source>
        <dbReference type="UniProtKB" id="Q13686"/>
    </source>
</evidence>
<evidence type="ECO:0000269" key="4">
    <source>
    </source>
</evidence>
<evidence type="ECO:0000303" key="5">
    <source>
    </source>
</evidence>
<evidence type="ECO:0000305" key="6"/>
<evidence type="ECO:0000305" key="7">
    <source>
    </source>
</evidence>
<evidence type="ECO:0000312" key="8">
    <source>
        <dbReference type="Araport" id="AT3G14140"/>
    </source>
</evidence>
<evidence type="ECO:0000312" key="9">
    <source>
        <dbReference type="EMBL" id="BAB02978.1"/>
    </source>
</evidence>
<organism>
    <name type="scientific">Arabidopsis thaliana</name>
    <name type="common">Mouse-ear cress</name>
    <dbReference type="NCBI Taxonomy" id="3702"/>
    <lineage>
        <taxon>Eukaryota</taxon>
        <taxon>Viridiplantae</taxon>
        <taxon>Streptophyta</taxon>
        <taxon>Embryophyta</taxon>
        <taxon>Tracheophyta</taxon>
        <taxon>Spermatophyta</taxon>
        <taxon>Magnoliopsida</taxon>
        <taxon>eudicotyledons</taxon>
        <taxon>Gunneridae</taxon>
        <taxon>Pentapetalae</taxon>
        <taxon>rosids</taxon>
        <taxon>malvids</taxon>
        <taxon>Brassicales</taxon>
        <taxon>Brassicaceae</taxon>
        <taxon>Camelineae</taxon>
        <taxon>Arabidopsis</taxon>
    </lineage>
</organism>
<proteinExistence type="evidence at transcript level"/>